<evidence type="ECO:0000250" key="1">
    <source>
        <dbReference type="UniProtKB" id="O70302"/>
    </source>
</evidence>
<evidence type="ECO:0000250" key="2">
    <source>
        <dbReference type="UniProtKB" id="P56198"/>
    </source>
</evidence>
<evidence type="ECO:0000255" key="3">
    <source>
        <dbReference type="PROSITE-ProRule" id="PRU00447"/>
    </source>
</evidence>
<evidence type="ECO:0000269" key="4">
    <source>
    </source>
</evidence>
<evidence type="ECO:0000269" key="5">
    <source>
    </source>
</evidence>
<evidence type="ECO:0000269" key="6">
    <source>
    </source>
</evidence>
<evidence type="ECO:0000269" key="7">
    <source ref="2"/>
</evidence>
<evidence type="ECO:0000303" key="8">
    <source>
    </source>
</evidence>
<evidence type="ECO:0000303" key="9">
    <source>
    </source>
</evidence>
<evidence type="ECO:0000305" key="10"/>
<evidence type="ECO:0000312" key="11">
    <source>
        <dbReference type="HGNC" id="HGNC:1976"/>
    </source>
</evidence>
<evidence type="ECO:0007829" key="12">
    <source>
        <dbReference type="PDB" id="2EEL"/>
    </source>
</evidence>
<dbReference type="EMBL" id="AF041378">
    <property type="protein sequence ID" value="AAC34987.1"/>
    <property type="molecule type" value="mRNA"/>
</dbReference>
<dbReference type="EMBL" id="AY364639">
    <property type="protein sequence ID" value="AAQ65241.1"/>
    <property type="molecule type" value="mRNA"/>
</dbReference>
<dbReference type="EMBL" id="EF444967">
    <property type="protein sequence ID" value="ACA05966.1"/>
    <property type="molecule type" value="Genomic_DNA"/>
</dbReference>
<dbReference type="CCDS" id="CCDS11856.1"/>
<dbReference type="RefSeq" id="NP_001270.1">
    <property type="nucleotide sequence ID" value="NM_001279.4"/>
</dbReference>
<dbReference type="PDB" id="2EEL">
    <property type="method" value="NMR"/>
    <property type="chains" value="A=33-110"/>
</dbReference>
<dbReference type="PDBsum" id="2EEL"/>
<dbReference type="BMRB" id="O60543"/>
<dbReference type="SMR" id="O60543"/>
<dbReference type="BioGRID" id="107570">
    <property type="interactions" value="16"/>
</dbReference>
<dbReference type="FunCoup" id="O60543">
    <property type="interactions" value="267"/>
</dbReference>
<dbReference type="IntAct" id="O60543">
    <property type="interactions" value="9"/>
</dbReference>
<dbReference type="MINT" id="O60543"/>
<dbReference type="STRING" id="9606.ENSP00000320209"/>
<dbReference type="BioMuta" id="CIDEA"/>
<dbReference type="jPOST" id="O60543"/>
<dbReference type="MassIVE" id="O60543"/>
<dbReference type="PaxDb" id="9606-ENSP00000320209"/>
<dbReference type="PeptideAtlas" id="O60543"/>
<dbReference type="ProteomicsDB" id="49464"/>
<dbReference type="Antibodypedia" id="6758">
    <property type="antibodies" value="305 antibodies from 35 providers"/>
</dbReference>
<dbReference type="DNASU" id="1149"/>
<dbReference type="Ensembl" id="ENST00000320477.10">
    <property type="protein sequence ID" value="ENSP00000320209.8"/>
    <property type="gene ID" value="ENSG00000176194.18"/>
</dbReference>
<dbReference type="GeneID" id="1149"/>
<dbReference type="KEGG" id="hsa:1149"/>
<dbReference type="MANE-Select" id="ENST00000320477.10">
    <property type="protein sequence ID" value="ENSP00000320209.8"/>
    <property type="RefSeq nucleotide sequence ID" value="NM_001279.4"/>
    <property type="RefSeq protein sequence ID" value="NP_001270.1"/>
</dbReference>
<dbReference type="UCSC" id="uc002kqt.5">
    <property type="organism name" value="human"/>
</dbReference>
<dbReference type="AGR" id="HGNC:1976"/>
<dbReference type="CTD" id="1149"/>
<dbReference type="DisGeNET" id="1149"/>
<dbReference type="GeneCards" id="CIDEA"/>
<dbReference type="HGNC" id="HGNC:1976">
    <property type="gene designation" value="CIDEA"/>
</dbReference>
<dbReference type="HPA" id="ENSG00000176194">
    <property type="expression patterns" value="Group enriched (adipose tissue, breast)"/>
</dbReference>
<dbReference type="MIM" id="604440">
    <property type="type" value="gene"/>
</dbReference>
<dbReference type="neXtProt" id="NX_O60543"/>
<dbReference type="OpenTargets" id="ENSG00000176194"/>
<dbReference type="PharmGKB" id="PA26514"/>
<dbReference type="VEuPathDB" id="HostDB:ENSG00000176194"/>
<dbReference type="eggNOG" id="ENOG502RG9M">
    <property type="taxonomic scope" value="Eukaryota"/>
</dbReference>
<dbReference type="GeneTree" id="ENSGT00390000018596"/>
<dbReference type="HOGENOM" id="CLU_090011_2_0_1"/>
<dbReference type="InParanoid" id="O60543"/>
<dbReference type="OMA" id="YDFRCTG"/>
<dbReference type="OrthoDB" id="6475906at2759"/>
<dbReference type="PAN-GO" id="O60543">
    <property type="GO annotations" value="1 GO annotation based on evolutionary models"/>
</dbReference>
<dbReference type="PhylomeDB" id="O60543"/>
<dbReference type="TreeFam" id="TF334321"/>
<dbReference type="PathwayCommons" id="O60543"/>
<dbReference type="Reactome" id="R-HSA-8964572">
    <property type="pathway name" value="Lipid particle organization"/>
</dbReference>
<dbReference type="Reactome" id="R-HSA-9844594">
    <property type="pathway name" value="Transcriptional regulation of brown and beige adipocyte differentiation by EBF2"/>
</dbReference>
<dbReference type="SignaLink" id="O60543"/>
<dbReference type="BioGRID-ORCS" id="1149">
    <property type="hits" value="12 hits in 1150 CRISPR screens"/>
</dbReference>
<dbReference type="ChiTaRS" id="CIDEA">
    <property type="organism name" value="human"/>
</dbReference>
<dbReference type="EvolutionaryTrace" id="O60543"/>
<dbReference type="GeneWiki" id="CIDEA"/>
<dbReference type="GenomeRNAi" id="1149"/>
<dbReference type="Pharos" id="O60543">
    <property type="development level" value="Tbio"/>
</dbReference>
<dbReference type="PRO" id="PR:O60543"/>
<dbReference type="Proteomes" id="UP000005640">
    <property type="component" value="Chromosome 18"/>
</dbReference>
<dbReference type="RNAct" id="O60543">
    <property type="molecule type" value="protein"/>
</dbReference>
<dbReference type="Bgee" id="ENSG00000176194">
    <property type="expression patterns" value="Expressed in adipose tissue of abdominal region and 108 other cell types or tissues"/>
</dbReference>
<dbReference type="ExpressionAtlas" id="O60543">
    <property type="expression patterns" value="baseline and differential"/>
</dbReference>
<dbReference type="GO" id="GO:0005737">
    <property type="term" value="C:cytoplasm"/>
    <property type="evidence" value="ECO:0000250"/>
    <property type="project" value="BHF-UCL"/>
</dbReference>
<dbReference type="GO" id="GO:0005829">
    <property type="term" value="C:cytosol"/>
    <property type="evidence" value="ECO:0000304"/>
    <property type="project" value="Reactome"/>
</dbReference>
<dbReference type="GO" id="GO:0005811">
    <property type="term" value="C:lipid droplet"/>
    <property type="evidence" value="ECO:0007669"/>
    <property type="project" value="UniProtKB-SubCell"/>
</dbReference>
<dbReference type="GO" id="GO:0005740">
    <property type="term" value="C:mitochondrial envelope"/>
    <property type="evidence" value="ECO:0000250"/>
    <property type="project" value="BHF-UCL"/>
</dbReference>
<dbReference type="GO" id="GO:0005739">
    <property type="term" value="C:mitochondrion"/>
    <property type="evidence" value="ECO:0000250"/>
    <property type="project" value="BHF-UCL"/>
</dbReference>
<dbReference type="GO" id="GO:0005634">
    <property type="term" value="C:nucleus"/>
    <property type="evidence" value="ECO:0000250"/>
    <property type="project" value="BHF-UCL"/>
</dbReference>
<dbReference type="GO" id="GO:0120013">
    <property type="term" value="F:lipid transfer activity"/>
    <property type="evidence" value="ECO:0000250"/>
    <property type="project" value="UniProtKB"/>
</dbReference>
<dbReference type="GO" id="GO:0070300">
    <property type="term" value="F:phosphatidic acid binding"/>
    <property type="evidence" value="ECO:0000250"/>
    <property type="project" value="UniProtKB"/>
</dbReference>
<dbReference type="GO" id="GO:0042803">
    <property type="term" value="F:protein homodimerization activity"/>
    <property type="evidence" value="ECO:0000250"/>
    <property type="project" value="BHF-UCL"/>
</dbReference>
<dbReference type="GO" id="GO:0006915">
    <property type="term" value="P:apoptotic process"/>
    <property type="evidence" value="ECO:0007669"/>
    <property type="project" value="UniProtKB-KW"/>
</dbReference>
<dbReference type="GO" id="GO:0070417">
    <property type="term" value="P:cellular response to cold"/>
    <property type="evidence" value="ECO:0007669"/>
    <property type="project" value="Ensembl"/>
</dbReference>
<dbReference type="GO" id="GO:0045444">
    <property type="term" value="P:fat cell differentiation"/>
    <property type="evidence" value="ECO:0000250"/>
    <property type="project" value="BHF-UCL"/>
</dbReference>
<dbReference type="GO" id="GO:0160077">
    <property type="term" value="P:lipid droplet fusion"/>
    <property type="evidence" value="ECO:0000314"/>
    <property type="project" value="UniProtKB"/>
</dbReference>
<dbReference type="GO" id="GO:0006629">
    <property type="term" value="P:lipid metabolic process"/>
    <property type="evidence" value="ECO:0000250"/>
    <property type="project" value="BHF-UCL"/>
</dbReference>
<dbReference type="GO" id="GO:0019915">
    <property type="term" value="P:lipid storage"/>
    <property type="evidence" value="ECO:0000314"/>
    <property type="project" value="UniProtKB"/>
</dbReference>
<dbReference type="GO" id="GO:0120163">
    <property type="term" value="P:negative regulation of cold-induced thermogenesis"/>
    <property type="evidence" value="ECO:0000250"/>
    <property type="project" value="YuBioLab"/>
</dbReference>
<dbReference type="GO" id="GO:0001818">
    <property type="term" value="P:negative regulation of cytokine production"/>
    <property type="evidence" value="ECO:0000315"/>
    <property type="project" value="BHF-UCL"/>
</dbReference>
<dbReference type="GO" id="GO:1900118">
    <property type="term" value="P:negative regulation of execution phase of apoptosis"/>
    <property type="evidence" value="ECO:0000250"/>
    <property type="project" value="BHF-UCL"/>
</dbReference>
<dbReference type="GO" id="GO:0050995">
    <property type="term" value="P:negative regulation of lipid catabolic process"/>
    <property type="evidence" value="ECO:0000314"/>
    <property type="project" value="UniProtKB"/>
</dbReference>
<dbReference type="GO" id="GO:0030512">
    <property type="term" value="P:negative regulation of transforming growth factor beta receptor signaling pathway"/>
    <property type="evidence" value="ECO:0000250"/>
    <property type="project" value="BHF-UCL"/>
</dbReference>
<dbReference type="GO" id="GO:0032720">
    <property type="term" value="P:negative regulation of tumor necrosis factor production"/>
    <property type="evidence" value="ECO:0000315"/>
    <property type="project" value="BHF-UCL"/>
</dbReference>
<dbReference type="GO" id="GO:1902510">
    <property type="term" value="P:regulation of apoptotic DNA fragmentation"/>
    <property type="evidence" value="ECO:0000250"/>
    <property type="project" value="BHF-UCL"/>
</dbReference>
<dbReference type="GO" id="GO:0042981">
    <property type="term" value="P:regulation of apoptotic process"/>
    <property type="evidence" value="ECO:0000318"/>
    <property type="project" value="GO_Central"/>
</dbReference>
<dbReference type="GO" id="GO:0035634">
    <property type="term" value="P:response to stilbenoid"/>
    <property type="evidence" value="ECO:0007669"/>
    <property type="project" value="Ensembl"/>
</dbReference>
<dbReference type="GO" id="GO:0001659">
    <property type="term" value="P:temperature homeostasis"/>
    <property type="evidence" value="ECO:0000250"/>
    <property type="project" value="BHF-UCL"/>
</dbReference>
<dbReference type="CDD" id="cd06539">
    <property type="entry name" value="CIDE_N_A"/>
    <property type="match status" value="1"/>
</dbReference>
<dbReference type="FunFam" id="3.10.20.10:FF:000008">
    <property type="entry name" value="Cell death inducing DFFA like effector a"/>
    <property type="match status" value="1"/>
</dbReference>
<dbReference type="Gene3D" id="3.10.20.10">
    <property type="match status" value="1"/>
</dbReference>
<dbReference type="InterPro" id="IPR003508">
    <property type="entry name" value="CIDE-N_dom"/>
</dbReference>
<dbReference type="InterPro" id="IPR032936">
    <property type="entry name" value="CIDEA_N"/>
</dbReference>
<dbReference type="PANTHER" id="PTHR12306">
    <property type="entry name" value="CELL DEATH ACTIVATOR CIDE"/>
    <property type="match status" value="1"/>
</dbReference>
<dbReference type="PANTHER" id="PTHR12306:SF8">
    <property type="entry name" value="LIPID TRANSFERASE CIDEA"/>
    <property type="match status" value="1"/>
</dbReference>
<dbReference type="Pfam" id="PF02017">
    <property type="entry name" value="CIDE-N"/>
    <property type="match status" value="1"/>
</dbReference>
<dbReference type="SMART" id="SM00266">
    <property type="entry name" value="CAD"/>
    <property type="match status" value="1"/>
</dbReference>
<dbReference type="SUPFAM" id="SSF54277">
    <property type="entry name" value="CAD &amp; PB1 domains"/>
    <property type="match status" value="1"/>
</dbReference>
<dbReference type="PROSITE" id="PS51135">
    <property type="entry name" value="CIDE_N"/>
    <property type="match status" value="1"/>
</dbReference>
<sequence>MEAARDYAGALIRPLTFMGSQTKRVLFTPLMHPARPFRVSNHDRSSRRGVMASSLQELISKTLDALVIATGLVTLVLEEDGTVVDTEEFFQTLGDNTHFMILEKGQKWMPGSQHVPTCSPPKRSGIARVTFDLYRLNPKDFIGCLNVKATMYEMYSVSYDIRCTGLKGLLRSLLRFLSYSAQVTGQFLIYLGTYMLRVLDDKEERPSLRSQAKGRFTCG</sequence>
<protein>
    <recommendedName>
        <fullName evidence="10">Lipid transferase CIDEA</fullName>
    </recommendedName>
    <alternativeName>
        <fullName evidence="9">Cell death activator CIDE-A</fullName>
    </alternativeName>
    <alternativeName>
        <fullName evidence="10">Cell death-inducing DFFA-like effector A</fullName>
    </alternativeName>
</protein>
<feature type="chain" id="PRO_0000144718" description="Lipid transferase CIDEA">
    <location>
        <begin position="1"/>
        <end position="219"/>
    </location>
</feature>
<feature type="domain" description="CIDE-N" evidence="3">
    <location>
        <begin position="33"/>
        <end position="110"/>
    </location>
</feature>
<feature type="region of interest" description="Amphipathic helix" evidence="1">
    <location>
        <begin position="163"/>
        <end position="180"/>
    </location>
</feature>
<feature type="sequence variant" id="VAR_048738" description="In dbSNP:rs11545881." evidence="7">
    <original>V</original>
    <variation>F</variation>
    <location>
        <position position="115"/>
    </location>
</feature>
<feature type="strand" evidence="12">
    <location>
        <begin position="35"/>
        <end position="40"/>
    </location>
</feature>
<feature type="strand" evidence="12">
    <location>
        <begin position="48"/>
        <end position="54"/>
    </location>
</feature>
<feature type="helix" evidence="12">
    <location>
        <begin position="55"/>
        <end position="65"/>
    </location>
</feature>
<feature type="strand" evidence="12">
    <location>
        <begin position="69"/>
        <end position="71"/>
    </location>
</feature>
<feature type="strand" evidence="12">
    <location>
        <begin position="73"/>
        <end position="77"/>
    </location>
</feature>
<feature type="turn" evidence="12">
    <location>
        <begin position="78"/>
        <end position="80"/>
    </location>
</feature>
<feature type="helix" evidence="12">
    <location>
        <begin position="87"/>
        <end position="90"/>
    </location>
</feature>
<feature type="strand" evidence="12">
    <location>
        <begin position="95"/>
        <end position="103"/>
    </location>
</feature>
<comment type="function">
    <text evidence="1 5 6">Lipid transferase that promotes unilocular lipid droplet formation by mediating lipid droplet fusion (PubMed:19843876, PubMed:26118629). Lipid droplet fusion promotes their enlargement, restricting lipolysis and favoring lipid storage (PubMed:19843876). Localizes on the lipid droplet surface, at focal contact sites between lipid droplets, and mediates atypical lipid droplet fusion by promoting directional net neutral lipid transfer from the smaller to larger lipid droplets (By similarity). The transfer direction may be driven by the internal pressure difference between the contacting lipid droplet pair and occurs at a lower rate than that promoted by CIDEC (By similarity). May also act as a CEBPB coactivator in epithelial cells to control the expression of a subset of CEBPB downstream target genes, including ID2, IGF1, PRLR, SOCS1, SOCS3, XDH, but not casein (By similarity). By interacting with CEBPB, strengthens the association of CEBPB with the XDH promoter, increases histone acetylation and dissociates HDAC1 from the promoter (By similarity). When overexpressed, induces apoptosis; the physiological significance of its role in apoptosis is unclear (By similarity).</text>
</comment>
<comment type="catalytic activity">
    <reaction evidence="1">
        <text>a triacyl-sn-glycerol(in) = a triacyl-sn-glycerol(out)</text>
        <dbReference type="Rhea" id="RHEA:39011"/>
        <dbReference type="ChEBI" id="CHEBI:64615"/>
    </reaction>
</comment>
<comment type="subunit">
    <text evidence="1 5">Homodimer (PubMed:19843876). Interacts with CIDEC (PubMed:19843876). Directly interacts with CEBPB (By similarity). Interacts with isoform CLSTN3beta of CLSTN3; inhibiting the lipid transferase activity of CIDEA (By similarity).</text>
</comment>
<comment type="subcellular location">
    <subcellularLocation>
        <location evidence="4">Lipid droplet</location>
    </subcellularLocation>
    <subcellularLocation>
        <location evidence="1">Nucleus</location>
    </subcellularLocation>
    <text evidence="4">Enriched at lipid droplet contact sites.</text>
</comment>
<comment type="tissue specificity">
    <text evidence="4">Expressed in omental and subcutaneous adipose tissue (at protein level).</text>
</comment>
<comment type="domain">
    <text evidence="1">The amphipathic helix mediates embedding into the lipid droplet phospholipid monolayer, promoting phosphatidic acid-binding, thereby facilitating triacylglycerol transfer.</text>
</comment>
<comment type="domain">
    <text evidence="2">The CIDE-N domain is involved in homodimerization which is crucial for its function in promoting lipid exchange and transfer.</text>
</comment>
<comment type="disease">
    <text evidence="4">In omental and subcutaneous adipose tissue of obese patients matched for BMI, expression levels correlate with insulin sensitivity. Expression is increased 5-6 fold in the group of patients with high insulin sensitivity, compared to the insulin-resistant group. This observation is consistent with the idea that triglyceride storage in adipocytes plays an important role in sequestering triglycerides and fatty acids away from the circulation and peripheral tissues, thus enhancing insulin sensitivity in liver and muscle.</text>
</comment>
<comment type="similarity">
    <text evidence="10">Belongs to the CIDE family.</text>
</comment>
<reference key="1">
    <citation type="journal article" date="1998" name="EMBO J.">
        <title>CIDE, a novel family of cell death activators with homology to the 45 kDa subunit of the DNA fragmentation factor.</title>
        <authorList>
            <person name="Inohara N."/>
            <person name="Koseki T."/>
            <person name="Chen S."/>
            <person name="Wu X."/>
            <person name="Nunez G."/>
        </authorList>
    </citation>
    <scope>NUCLEOTIDE SEQUENCE [MRNA]</scope>
</reference>
<reference key="2">
    <citation type="submission" date="2003-08" db="EMBL/GenBank/DDBJ databases">
        <title>Homo sapiens cell death activator CIDE-A mRNA.</title>
        <authorList>
            <person name="Liang L."/>
            <person name="Xu Z."/>
            <person name="Li T."/>
            <person name="Zhao M."/>
        </authorList>
    </citation>
    <scope>NUCLEOTIDE SEQUENCE [MRNA]</scope>
    <scope>VARIANT PHE-115</scope>
    <source>
        <tissue>Brain</tissue>
    </source>
</reference>
<reference key="3">
    <citation type="submission" date="2007-02" db="EMBL/GenBank/DDBJ databases">
        <authorList>
            <consortium name="NHLBI resequencing and genotyping service (RS&amp;G)"/>
        </authorList>
    </citation>
    <scope>NUCLEOTIDE SEQUENCE [GENOMIC DNA]</scope>
</reference>
<reference key="4">
    <citation type="journal article" date="2008" name="Proc. Natl. Acad. Sci. U.S.A.">
        <title>Cidea is associated with lipid droplets and insulin sensitivity in humans.</title>
        <authorList>
            <person name="Puri V."/>
            <person name="Ranjit S."/>
            <person name="Konda S."/>
            <person name="Nicoloro S.M."/>
            <person name="Straubhaar J."/>
            <person name="Chawla A."/>
            <person name="Chouinard M."/>
            <person name="Lin C."/>
            <person name="Burkart A."/>
            <person name="Corvera S."/>
            <person name="Perugini R.A."/>
            <person name="Czech M.P."/>
        </authorList>
    </citation>
    <scope>SUBCELLULAR LOCATION</scope>
    <scope>DISEASE</scope>
    <scope>TISSUE SPECIFICITY</scope>
</reference>
<reference key="5">
    <citation type="journal article" date="2009" name="Am. J. Physiol.">
        <title>Functional analysis of FSP27 protein regions for lipid droplet localization, caspase-dependent apoptosis, and dimerization with CIDEA.</title>
        <authorList>
            <person name="Liu K."/>
            <person name="Zhou S."/>
            <person name="Kim J.Y."/>
            <person name="Tillison K."/>
            <person name="Majors D."/>
            <person name="Rearick D."/>
            <person name="Lee J.H."/>
            <person name="Fernandez-Boyanapalli R.F."/>
            <person name="Barricklow K."/>
            <person name="Houston M.S."/>
            <person name="Smas C.M."/>
        </authorList>
    </citation>
    <scope>FUNCTION</scope>
    <scope>INTERACTION WITH CIDEC</scope>
</reference>
<reference key="6">
    <citation type="journal article" date="2015" name="Nat. Commun.">
        <title>Cidea improves the metabolic profile through expansion of adipose tissue.</title>
        <authorList>
            <person name="Abreu-Vieira G."/>
            <person name="Fischer A.W."/>
            <person name="Mattsson C."/>
            <person name="de Jong J.M."/>
            <person name="Shabalina I.G."/>
            <person name="Ryden M."/>
            <person name="Laurencikiene J."/>
            <person name="Arner P."/>
            <person name="Cannon B."/>
            <person name="Nedergaard J."/>
            <person name="Petrovic N."/>
        </authorList>
    </citation>
    <scope>FUNCTION</scope>
</reference>
<reference key="7">
    <citation type="submission" date="2007-08" db="PDB data bank">
        <title>Solution structure of the CIDE-N domain of human cell death activator CIDE-A.</title>
        <authorList>
            <consortium name="RIKEN structural genomics initiative (RSGI)"/>
        </authorList>
    </citation>
    <scope>STRUCTURE BY NMR OF 33-110</scope>
</reference>
<proteinExistence type="evidence at protein level"/>
<name>CIDEA_HUMAN</name>
<organism>
    <name type="scientific">Homo sapiens</name>
    <name type="common">Human</name>
    <dbReference type="NCBI Taxonomy" id="9606"/>
    <lineage>
        <taxon>Eukaryota</taxon>
        <taxon>Metazoa</taxon>
        <taxon>Chordata</taxon>
        <taxon>Craniata</taxon>
        <taxon>Vertebrata</taxon>
        <taxon>Euteleostomi</taxon>
        <taxon>Mammalia</taxon>
        <taxon>Eutheria</taxon>
        <taxon>Euarchontoglires</taxon>
        <taxon>Primates</taxon>
        <taxon>Haplorrhini</taxon>
        <taxon>Catarrhini</taxon>
        <taxon>Hominidae</taxon>
        <taxon>Homo</taxon>
    </lineage>
</organism>
<keyword id="KW-0002">3D-structure</keyword>
<keyword id="KW-0010">Activator</keyword>
<keyword id="KW-0053">Apoptosis</keyword>
<keyword id="KW-0551">Lipid droplet</keyword>
<keyword id="KW-0539">Nucleus</keyword>
<keyword id="KW-1267">Proteomics identification</keyword>
<keyword id="KW-1185">Reference proteome</keyword>
<keyword id="KW-0804">Transcription</keyword>
<keyword id="KW-0805">Transcription regulation</keyword>
<accession>O60543</accession>
<accession>B0YIY7</accession>
<accession>Q6UPR7</accession>
<gene>
    <name evidence="8 11" type="primary">CIDEA</name>
</gene>